<comment type="function">
    <text evidence="1">Condensation of UDP-2,3-diacylglucosamine and 2,3-diacylglucosamine-1-phosphate to form lipid A disaccharide, a precursor of lipid A, a phosphorylated glycolipid that anchors the lipopolysaccharide to the outer membrane of the cell.</text>
</comment>
<comment type="catalytic activity">
    <reaction evidence="1">
        <text>a lipid X + a UDP-2-N,3-O-bis[(3R)-3-hydroxyacyl]-alpha-D-glucosamine = a lipid A disaccharide + UDP + H(+)</text>
        <dbReference type="Rhea" id="RHEA:67828"/>
        <dbReference type="ChEBI" id="CHEBI:15378"/>
        <dbReference type="ChEBI" id="CHEBI:58223"/>
        <dbReference type="ChEBI" id="CHEBI:137748"/>
        <dbReference type="ChEBI" id="CHEBI:176338"/>
        <dbReference type="ChEBI" id="CHEBI:176343"/>
        <dbReference type="EC" id="2.4.1.182"/>
    </reaction>
</comment>
<comment type="pathway">
    <text evidence="1">Bacterial outer membrane biogenesis; LPS lipid A biosynthesis.</text>
</comment>
<comment type="similarity">
    <text evidence="1">Belongs to the LpxB family.</text>
</comment>
<reference key="1">
    <citation type="journal article" date="2008" name="PLoS Genet.">
        <title>Complete genome sequence of the complex carbohydrate-degrading marine bacterium, Saccharophagus degradans strain 2-40 T.</title>
        <authorList>
            <person name="Weiner R.M."/>
            <person name="Taylor L.E. II"/>
            <person name="Henrissat B."/>
            <person name="Hauser L."/>
            <person name="Land M."/>
            <person name="Coutinho P.M."/>
            <person name="Rancurel C."/>
            <person name="Saunders E.H."/>
            <person name="Longmire A.G."/>
            <person name="Zhang H."/>
            <person name="Bayer E.A."/>
            <person name="Gilbert H.J."/>
            <person name="Larimer F."/>
            <person name="Zhulin I.B."/>
            <person name="Ekborg N.A."/>
            <person name="Lamed R."/>
            <person name="Richardson P.M."/>
            <person name="Borovok I."/>
            <person name="Hutcheson S."/>
        </authorList>
    </citation>
    <scope>NUCLEOTIDE SEQUENCE [LARGE SCALE GENOMIC DNA]</scope>
    <source>
        <strain>2-40 / ATCC 43961 / DSM 17024</strain>
    </source>
</reference>
<evidence type="ECO:0000255" key="1">
    <source>
        <dbReference type="HAMAP-Rule" id="MF_00392"/>
    </source>
</evidence>
<proteinExistence type="inferred from homology"/>
<protein>
    <recommendedName>
        <fullName evidence="1">Lipid-A-disaccharide synthase</fullName>
        <ecNumber evidence="1">2.4.1.182</ecNumber>
    </recommendedName>
</protein>
<gene>
    <name evidence="1" type="primary">lpxB</name>
    <name type="ordered locus">Sde_2584</name>
</gene>
<keyword id="KW-0328">Glycosyltransferase</keyword>
<keyword id="KW-0441">Lipid A biosynthesis</keyword>
<keyword id="KW-0444">Lipid biosynthesis</keyword>
<keyword id="KW-0443">Lipid metabolism</keyword>
<keyword id="KW-1185">Reference proteome</keyword>
<keyword id="KW-0808">Transferase</keyword>
<accession>Q21HI5</accession>
<dbReference type="EC" id="2.4.1.182" evidence="1"/>
<dbReference type="EMBL" id="CP000282">
    <property type="protein sequence ID" value="ABD81844.1"/>
    <property type="molecule type" value="Genomic_DNA"/>
</dbReference>
<dbReference type="RefSeq" id="WP_011469061.1">
    <property type="nucleotide sequence ID" value="NC_007912.1"/>
</dbReference>
<dbReference type="SMR" id="Q21HI5"/>
<dbReference type="STRING" id="203122.Sde_2584"/>
<dbReference type="CAZy" id="GT19">
    <property type="family name" value="Glycosyltransferase Family 19"/>
</dbReference>
<dbReference type="GeneID" id="98614247"/>
<dbReference type="KEGG" id="sde:Sde_2584"/>
<dbReference type="eggNOG" id="COG0763">
    <property type="taxonomic scope" value="Bacteria"/>
</dbReference>
<dbReference type="HOGENOM" id="CLU_036577_3_0_6"/>
<dbReference type="OrthoDB" id="9801642at2"/>
<dbReference type="UniPathway" id="UPA00973"/>
<dbReference type="Proteomes" id="UP000001947">
    <property type="component" value="Chromosome"/>
</dbReference>
<dbReference type="GO" id="GO:0016020">
    <property type="term" value="C:membrane"/>
    <property type="evidence" value="ECO:0007669"/>
    <property type="project" value="GOC"/>
</dbReference>
<dbReference type="GO" id="GO:0008915">
    <property type="term" value="F:lipid-A-disaccharide synthase activity"/>
    <property type="evidence" value="ECO:0007669"/>
    <property type="project" value="UniProtKB-UniRule"/>
</dbReference>
<dbReference type="GO" id="GO:0005543">
    <property type="term" value="F:phospholipid binding"/>
    <property type="evidence" value="ECO:0007669"/>
    <property type="project" value="TreeGrafter"/>
</dbReference>
<dbReference type="GO" id="GO:0009245">
    <property type="term" value="P:lipid A biosynthetic process"/>
    <property type="evidence" value="ECO:0007669"/>
    <property type="project" value="UniProtKB-UniRule"/>
</dbReference>
<dbReference type="HAMAP" id="MF_00392">
    <property type="entry name" value="LpxB"/>
    <property type="match status" value="1"/>
</dbReference>
<dbReference type="InterPro" id="IPR003835">
    <property type="entry name" value="Glyco_trans_19"/>
</dbReference>
<dbReference type="NCBIfam" id="TIGR00215">
    <property type="entry name" value="lpxB"/>
    <property type="match status" value="1"/>
</dbReference>
<dbReference type="PANTHER" id="PTHR30372">
    <property type="entry name" value="LIPID-A-DISACCHARIDE SYNTHASE"/>
    <property type="match status" value="1"/>
</dbReference>
<dbReference type="PANTHER" id="PTHR30372:SF4">
    <property type="entry name" value="LIPID-A-DISACCHARIDE SYNTHASE, MITOCHONDRIAL-RELATED"/>
    <property type="match status" value="1"/>
</dbReference>
<dbReference type="Pfam" id="PF02684">
    <property type="entry name" value="LpxB"/>
    <property type="match status" value="1"/>
</dbReference>
<dbReference type="SUPFAM" id="SSF53756">
    <property type="entry name" value="UDP-Glycosyltransferase/glycogen phosphorylase"/>
    <property type="match status" value="1"/>
</dbReference>
<name>LPXB_SACD2</name>
<organism>
    <name type="scientific">Saccharophagus degradans (strain 2-40 / ATCC 43961 / DSM 17024)</name>
    <dbReference type="NCBI Taxonomy" id="203122"/>
    <lineage>
        <taxon>Bacteria</taxon>
        <taxon>Pseudomonadati</taxon>
        <taxon>Pseudomonadota</taxon>
        <taxon>Gammaproteobacteria</taxon>
        <taxon>Cellvibrionales</taxon>
        <taxon>Cellvibrionaceae</taxon>
        <taxon>Saccharophagus</taxon>
    </lineage>
</organism>
<feature type="chain" id="PRO_0000255220" description="Lipid-A-disaccharide synthase">
    <location>
        <begin position="1"/>
        <end position="388"/>
    </location>
</feature>
<sequence length="388" mass="42934">MSSLKRVAIVVGEASGDILGAGLMAALKKRYPDCEFEGIGGPKMLALGFNSLYQMDRLAVMGFVEPLKRLPELLGIRKSLRQRYLTNPPDVFIGIDAPDFNLNLEVNLREAGVPVVHYVSPSVWAWRRGRLKKIAKAVDLMLTLFPFESSFFNEQNIPNLFVGHPLADTIPLENEKTGARERLGLSAENNERWVALLPGSRGGEVEHLCERFLLAAQQSFAGRPNLRIIIPAANDARHSQISEVLKRYSELPVTLLHGQSHDAMLAADAILIASGTATLEAMLLKRPMVIAYHMAAFSYWLLSKLVKSKFVGLPNLLADKELVPELLQHNATPSQLSAALNVYLDSEKTTQQLIEQFNAIHLQLRRDASETAAQGIVDMLAAKRDIAR</sequence>